<reference key="1">
    <citation type="journal article" date="2000" name="Nature">
        <title>Genome sequence of the endocellular bacterial symbiont of aphids Buchnera sp. APS.</title>
        <authorList>
            <person name="Shigenobu S."/>
            <person name="Watanabe H."/>
            <person name="Hattori M."/>
            <person name="Sakaki Y."/>
            <person name="Ishikawa H."/>
        </authorList>
    </citation>
    <scope>NUCLEOTIDE SEQUENCE [LARGE SCALE GENOMIC DNA]</scope>
    <source>
        <strain>APS</strain>
    </source>
</reference>
<sequence length="970" mass="114478">MSIYRRYISKSVIFFSVFFVIFFLFIESSVGFKYIFNFTNRIFIGLKAEEISGNWRDFTLKNIKYDVFGISITANSLHIVLDTRSLFKMSTIFKKIETKNVILSLKKNTASNFSQNSLPSKISKNIFFIKYPIILKKIHADKILFTSPKVRVSFLDVLSGIKLVRNNIIFSPTYINTIHVSSAKFNFEKKNILNKSTIIKNFNKIKKIYSFSYFSSNQTKKNFPLNIYLKSLKCNKTQFIDYEYKNLLQVELQANIENNILQINKMKVDSSFLKMNSYGKVIFNNDYSISCVMNSKTVIPSLYNKSINFQLKANFNVDHQLIFKLISKDLYNMKINGLVFLNFSDYPFFIKLQSRNLSCVIKKNYIFKLKSFDGVLKGYINNYFFSLKNIFTLQDLPPIFIDIQGRGDLNNIFLKKINFFPIKQKKFYKKVIHPEDYIKYNQYILKLIGQINITGKSDRHTHYVHIPKIDLYANIMKKKLSILGALYYKNFNFIETPGINLLLGKNKLYLRGSLGKKYNIYSSIYANNLDYFFPKLQGRMQAKVNFLGNNKFPIISSKILARDLNWNNIYFKNIKVLTGININNTFSGKMLIYANKIHFYKFYINTLHIQTYSNNHKQNFSFLLKSNRLHINLIINGAFNNKTGHWHGFFKKINIRTFWGQVTAKKNNFIHYYDSHNSITNFYQKSIKKRNCFSSFLYNVKMSFFNLFNRSFISFESKLSINAKLKLILGKMISDGAIFLKGNNTKLEKKINKKIFIQNIDFFKISMNLIKNDFKSKWIIKKNKKLSNNKNIFGYLNIIDIYNKKNIKGEFIFYKFPFSFINFFTTNFKEVSGKFQSKIKLFGTLYQPKVLADVHFKNIFIRSNNILKYITLFFPYFLGKVDNIKINQEIMMNKGNILFTLKPFFKNNSADIEWNIAFNSKKISVLIFPKIKVKFSSKLNLHYLFSKYDLIGYIKFSLFYFQINEKNFIF</sequence>
<feature type="chain" id="PRO_0000216246" description="Uncharacterized protein BU087">
    <location>
        <begin position="1"/>
        <end position="970"/>
    </location>
</feature>
<feature type="transmembrane region" description="Helical" evidence="1">
    <location>
        <begin position="12"/>
        <end position="32"/>
    </location>
</feature>
<proteinExistence type="predicted"/>
<keyword id="KW-0472">Membrane</keyword>
<keyword id="KW-1185">Reference proteome</keyword>
<keyword id="KW-0812">Transmembrane</keyword>
<keyword id="KW-1133">Transmembrane helix</keyword>
<dbReference type="EMBL" id="BA000003">
    <property type="protein sequence ID" value="BAB12807.1"/>
    <property type="molecule type" value="Genomic_DNA"/>
</dbReference>
<dbReference type="RefSeq" id="NP_239921.1">
    <property type="nucleotide sequence ID" value="NC_002528.1"/>
</dbReference>
<dbReference type="RefSeq" id="WP_010895939.1">
    <property type="nucleotide sequence ID" value="NC_002528.1"/>
</dbReference>
<dbReference type="STRING" id="563178.BUAP5A_086"/>
<dbReference type="EnsemblBacteria" id="BAB12807">
    <property type="protein sequence ID" value="BAB12807"/>
    <property type="gene ID" value="BAB12807"/>
</dbReference>
<dbReference type="KEGG" id="buc:BU087"/>
<dbReference type="PATRIC" id="fig|107806.10.peg.95"/>
<dbReference type="eggNOG" id="COG2911">
    <property type="taxonomic scope" value="Bacteria"/>
</dbReference>
<dbReference type="HOGENOM" id="CLU_306047_0_0_6"/>
<dbReference type="BioCyc" id="BAPH107806:GBZJ-86-MONOMER"/>
<dbReference type="Proteomes" id="UP000001806">
    <property type="component" value="Chromosome"/>
</dbReference>
<dbReference type="GO" id="GO:0005886">
    <property type="term" value="C:plasma membrane"/>
    <property type="evidence" value="ECO:0007669"/>
    <property type="project" value="TreeGrafter"/>
</dbReference>
<dbReference type="GO" id="GO:0097347">
    <property type="term" value="C:TAM protein secretion complex"/>
    <property type="evidence" value="ECO:0007669"/>
    <property type="project" value="TreeGrafter"/>
</dbReference>
<dbReference type="GO" id="GO:0009306">
    <property type="term" value="P:protein secretion"/>
    <property type="evidence" value="ECO:0007669"/>
    <property type="project" value="TreeGrafter"/>
</dbReference>
<dbReference type="PANTHER" id="PTHR36985">
    <property type="entry name" value="TRANSLOCATION AND ASSEMBLY MODULE SUBUNIT TAMB"/>
    <property type="match status" value="1"/>
</dbReference>
<dbReference type="PANTHER" id="PTHR36985:SF1">
    <property type="entry name" value="TRANSLOCATION AND ASSEMBLY MODULE SUBUNIT TAMB"/>
    <property type="match status" value="1"/>
</dbReference>
<organism>
    <name type="scientific">Buchnera aphidicola subsp. Acyrthosiphon pisum (strain APS)</name>
    <name type="common">Acyrthosiphon pisum symbiotic bacterium</name>
    <dbReference type="NCBI Taxonomy" id="107806"/>
    <lineage>
        <taxon>Bacteria</taxon>
        <taxon>Pseudomonadati</taxon>
        <taxon>Pseudomonadota</taxon>
        <taxon>Gammaproteobacteria</taxon>
        <taxon>Enterobacterales</taxon>
        <taxon>Erwiniaceae</taxon>
        <taxon>Buchnera</taxon>
    </lineage>
</organism>
<name>Y087_BUCAI</name>
<comment type="subcellular location">
    <subcellularLocation>
        <location evidence="2">Membrane</location>
        <topology evidence="2">Single-pass membrane protein</topology>
    </subcellularLocation>
</comment>
<comment type="similarity">
    <text evidence="2">To E.coli YtfN.</text>
</comment>
<evidence type="ECO:0000255" key="1"/>
<evidence type="ECO:0000305" key="2"/>
<protein>
    <recommendedName>
        <fullName>Uncharacterized protein BU087</fullName>
    </recommendedName>
</protein>
<gene>
    <name type="ordered locus">BU087</name>
</gene>
<accession>P57189</accession>